<comment type="catalytic activity">
    <reaction evidence="1">
        <text>tRNA(Phe) + L-phenylalanine + ATP = L-phenylalanyl-tRNA(Phe) + AMP + diphosphate + H(+)</text>
        <dbReference type="Rhea" id="RHEA:19413"/>
        <dbReference type="Rhea" id="RHEA-COMP:9668"/>
        <dbReference type="Rhea" id="RHEA-COMP:9699"/>
        <dbReference type="ChEBI" id="CHEBI:15378"/>
        <dbReference type="ChEBI" id="CHEBI:30616"/>
        <dbReference type="ChEBI" id="CHEBI:33019"/>
        <dbReference type="ChEBI" id="CHEBI:58095"/>
        <dbReference type="ChEBI" id="CHEBI:78442"/>
        <dbReference type="ChEBI" id="CHEBI:78531"/>
        <dbReference type="ChEBI" id="CHEBI:456215"/>
        <dbReference type="EC" id="6.1.1.20"/>
    </reaction>
</comment>
<comment type="cofactor">
    <cofactor evidence="1">
        <name>Mg(2+)</name>
        <dbReference type="ChEBI" id="CHEBI:18420"/>
    </cofactor>
    <text evidence="1">Binds 2 magnesium ions per tetramer.</text>
</comment>
<comment type="subunit">
    <text evidence="1">Tetramer of two alpha and two beta subunits.</text>
</comment>
<comment type="subcellular location">
    <subcellularLocation>
        <location evidence="1">Cytoplasm</location>
    </subcellularLocation>
</comment>
<comment type="similarity">
    <text evidence="1">Belongs to the class-II aminoacyl-tRNA synthetase family. Phe-tRNA synthetase alpha subunit type 1 subfamily.</text>
</comment>
<dbReference type="EC" id="6.1.1.20" evidence="1"/>
<dbReference type="EMBL" id="CP000538">
    <property type="protein sequence ID" value="EAQ72315.1"/>
    <property type="molecule type" value="Genomic_DNA"/>
</dbReference>
<dbReference type="RefSeq" id="WP_002852567.1">
    <property type="nucleotide sequence ID" value="NC_008787.1"/>
</dbReference>
<dbReference type="SMR" id="A1VZN1"/>
<dbReference type="KEGG" id="cjj:CJJ81176_0906"/>
<dbReference type="eggNOG" id="COG0016">
    <property type="taxonomic scope" value="Bacteria"/>
</dbReference>
<dbReference type="HOGENOM" id="CLU_025086_0_1_7"/>
<dbReference type="Proteomes" id="UP000000646">
    <property type="component" value="Chromosome"/>
</dbReference>
<dbReference type="GO" id="GO:0005737">
    <property type="term" value="C:cytoplasm"/>
    <property type="evidence" value="ECO:0007669"/>
    <property type="project" value="UniProtKB-SubCell"/>
</dbReference>
<dbReference type="GO" id="GO:0005524">
    <property type="term" value="F:ATP binding"/>
    <property type="evidence" value="ECO:0007669"/>
    <property type="project" value="UniProtKB-UniRule"/>
</dbReference>
<dbReference type="GO" id="GO:0000287">
    <property type="term" value="F:magnesium ion binding"/>
    <property type="evidence" value="ECO:0007669"/>
    <property type="project" value="UniProtKB-UniRule"/>
</dbReference>
<dbReference type="GO" id="GO:0004826">
    <property type="term" value="F:phenylalanine-tRNA ligase activity"/>
    <property type="evidence" value="ECO:0007669"/>
    <property type="project" value="UniProtKB-UniRule"/>
</dbReference>
<dbReference type="GO" id="GO:0000049">
    <property type="term" value="F:tRNA binding"/>
    <property type="evidence" value="ECO:0007669"/>
    <property type="project" value="InterPro"/>
</dbReference>
<dbReference type="GO" id="GO:0006432">
    <property type="term" value="P:phenylalanyl-tRNA aminoacylation"/>
    <property type="evidence" value="ECO:0007669"/>
    <property type="project" value="UniProtKB-UniRule"/>
</dbReference>
<dbReference type="CDD" id="cd00496">
    <property type="entry name" value="PheRS_alpha_core"/>
    <property type="match status" value="1"/>
</dbReference>
<dbReference type="Gene3D" id="3.30.930.10">
    <property type="entry name" value="Bira Bifunctional Protein, Domain 2"/>
    <property type="match status" value="1"/>
</dbReference>
<dbReference type="HAMAP" id="MF_00281">
    <property type="entry name" value="Phe_tRNA_synth_alpha1"/>
    <property type="match status" value="1"/>
</dbReference>
<dbReference type="InterPro" id="IPR006195">
    <property type="entry name" value="aa-tRNA-synth_II"/>
</dbReference>
<dbReference type="InterPro" id="IPR045864">
    <property type="entry name" value="aa-tRNA-synth_II/BPL/LPL"/>
</dbReference>
<dbReference type="InterPro" id="IPR004529">
    <property type="entry name" value="Phe-tRNA-synth_IIc_asu"/>
</dbReference>
<dbReference type="InterPro" id="IPR004188">
    <property type="entry name" value="Phe-tRNA_ligase_II_N"/>
</dbReference>
<dbReference type="InterPro" id="IPR022911">
    <property type="entry name" value="Phe_tRNA_ligase_alpha1_bac"/>
</dbReference>
<dbReference type="InterPro" id="IPR002319">
    <property type="entry name" value="Phenylalanyl-tRNA_Synthase"/>
</dbReference>
<dbReference type="InterPro" id="IPR010978">
    <property type="entry name" value="tRNA-bd_arm"/>
</dbReference>
<dbReference type="NCBIfam" id="TIGR00468">
    <property type="entry name" value="pheS"/>
    <property type="match status" value="1"/>
</dbReference>
<dbReference type="PANTHER" id="PTHR11538:SF41">
    <property type="entry name" value="PHENYLALANINE--TRNA LIGASE, MITOCHONDRIAL"/>
    <property type="match status" value="1"/>
</dbReference>
<dbReference type="PANTHER" id="PTHR11538">
    <property type="entry name" value="PHENYLALANYL-TRNA SYNTHETASE"/>
    <property type="match status" value="1"/>
</dbReference>
<dbReference type="Pfam" id="PF02912">
    <property type="entry name" value="Phe_tRNA-synt_N"/>
    <property type="match status" value="1"/>
</dbReference>
<dbReference type="Pfam" id="PF01409">
    <property type="entry name" value="tRNA-synt_2d"/>
    <property type="match status" value="1"/>
</dbReference>
<dbReference type="SUPFAM" id="SSF55681">
    <property type="entry name" value="Class II aaRS and biotin synthetases"/>
    <property type="match status" value="1"/>
</dbReference>
<dbReference type="SUPFAM" id="SSF46589">
    <property type="entry name" value="tRNA-binding arm"/>
    <property type="match status" value="1"/>
</dbReference>
<dbReference type="PROSITE" id="PS50862">
    <property type="entry name" value="AA_TRNA_LIGASE_II"/>
    <property type="match status" value="1"/>
</dbReference>
<feature type="chain" id="PRO_1000006810" description="Phenylalanine--tRNA ligase alpha subunit">
    <location>
        <begin position="1"/>
        <end position="330"/>
    </location>
</feature>
<feature type="binding site" evidence="1">
    <location>
        <position position="246"/>
    </location>
    <ligand>
        <name>Mg(2+)</name>
        <dbReference type="ChEBI" id="CHEBI:18420"/>
        <note>shared with beta subunit</note>
    </ligand>
</feature>
<proteinExistence type="inferred from homology"/>
<accession>A1VZN1</accession>
<reference key="1">
    <citation type="submission" date="2006-12" db="EMBL/GenBank/DDBJ databases">
        <authorList>
            <person name="Fouts D.E."/>
            <person name="Nelson K.E."/>
            <person name="Sebastian Y."/>
        </authorList>
    </citation>
    <scope>NUCLEOTIDE SEQUENCE [LARGE SCALE GENOMIC DNA]</scope>
    <source>
        <strain>81-176</strain>
    </source>
</reference>
<name>SYFA_CAMJJ</name>
<protein>
    <recommendedName>
        <fullName evidence="1">Phenylalanine--tRNA ligase alpha subunit</fullName>
        <ecNumber evidence="1">6.1.1.20</ecNumber>
    </recommendedName>
    <alternativeName>
        <fullName evidence="1">Phenylalanyl-tRNA synthetase alpha subunit</fullName>
        <shortName evidence="1">PheRS</shortName>
    </alternativeName>
</protein>
<keyword id="KW-0030">Aminoacyl-tRNA synthetase</keyword>
<keyword id="KW-0067">ATP-binding</keyword>
<keyword id="KW-0963">Cytoplasm</keyword>
<keyword id="KW-0436">Ligase</keyword>
<keyword id="KW-0460">Magnesium</keyword>
<keyword id="KW-0479">Metal-binding</keyword>
<keyword id="KW-0547">Nucleotide-binding</keyword>
<keyword id="KW-0648">Protein biosynthesis</keyword>
<gene>
    <name evidence="1" type="primary">pheS</name>
    <name type="ordered locus">CJJ81176_0906</name>
</gene>
<sequence>MQNFIEQIQKCENLNDLEAIRISVLGKKGILTEGFTKLKELEDEAKKEFAAKLNAQKEIFNEAYLAKFKDLENLALEERMKQDALNFNYFDESITTGALHPVMSTMDKIIEYFIALNFSIEKGPLIEDDFHNFEALNLPKSHPARDMQDTFYFDDKRLLRTQTSPVQIRTMLAQKPPIRMIAPGAVFRRDFDITHTPMFHQVEGLVVEEGQKVSFANLKSVLEDFLRYMFGDVKVRFRPSFFPFTEPSAEVDISCVFCKGKGCRVCKHTGWLEVLGCGIVDPNVYNFVGYENVSGYAFGLGVERFAMLLHQIPDLRSLFEGDLRLLEQFR</sequence>
<organism>
    <name type="scientific">Campylobacter jejuni subsp. jejuni serotype O:23/36 (strain 81-176)</name>
    <dbReference type="NCBI Taxonomy" id="354242"/>
    <lineage>
        <taxon>Bacteria</taxon>
        <taxon>Pseudomonadati</taxon>
        <taxon>Campylobacterota</taxon>
        <taxon>Epsilonproteobacteria</taxon>
        <taxon>Campylobacterales</taxon>
        <taxon>Campylobacteraceae</taxon>
        <taxon>Campylobacter</taxon>
    </lineage>
</organism>
<evidence type="ECO:0000255" key="1">
    <source>
        <dbReference type="HAMAP-Rule" id="MF_00281"/>
    </source>
</evidence>